<protein>
    <recommendedName>
        <fullName evidence="1">Acetylglutamate kinase</fullName>
        <ecNumber evidence="1">2.7.2.8</ecNumber>
    </recommendedName>
    <alternativeName>
        <fullName evidence="1">N-acetyl-L-glutamate 5-phosphotransferase</fullName>
    </alternativeName>
    <alternativeName>
        <fullName evidence="1">NAG kinase</fullName>
        <shortName evidence="1">NAGK</shortName>
    </alternativeName>
</protein>
<keyword id="KW-0028">Amino-acid biosynthesis</keyword>
<keyword id="KW-0055">Arginine biosynthesis</keyword>
<keyword id="KW-0067">ATP-binding</keyword>
<keyword id="KW-0963">Cytoplasm</keyword>
<keyword id="KW-0418">Kinase</keyword>
<keyword id="KW-0547">Nucleotide-binding</keyword>
<keyword id="KW-1185">Reference proteome</keyword>
<keyword id="KW-0808">Transferase</keyword>
<feature type="chain" id="PRO_0000264731" description="Acetylglutamate kinase">
    <location>
        <begin position="1"/>
        <end position="305"/>
    </location>
</feature>
<feature type="binding site" evidence="1">
    <location>
        <begin position="78"/>
        <end position="79"/>
    </location>
    <ligand>
        <name>substrate</name>
    </ligand>
</feature>
<feature type="binding site" evidence="1">
    <location>
        <position position="100"/>
    </location>
    <ligand>
        <name>substrate</name>
    </ligand>
</feature>
<feature type="binding site" evidence="1">
    <location>
        <position position="202"/>
    </location>
    <ligand>
        <name>substrate</name>
    </ligand>
</feature>
<feature type="site" description="Transition state stabilizer" evidence="1">
    <location>
        <position position="43"/>
    </location>
</feature>
<feature type="site" description="Transition state stabilizer" evidence="1">
    <location>
        <position position="262"/>
    </location>
</feature>
<comment type="function">
    <text evidence="1">Catalyzes the ATP-dependent phosphorylation of N-acetyl-L-glutamate.</text>
</comment>
<comment type="catalytic activity">
    <reaction evidence="1">
        <text>N-acetyl-L-glutamate + ATP = N-acetyl-L-glutamyl 5-phosphate + ADP</text>
        <dbReference type="Rhea" id="RHEA:14629"/>
        <dbReference type="ChEBI" id="CHEBI:30616"/>
        <dbReference type="ChEBI" id="CHEBI:44337"/>
        <dbReference type="ChEBI" id="CHEBI:57936"/>
        <dbReference type="ChEBI" id="CHEBI:456216"/>
        <dbReference type="EC" id="2.7.2.8"/>
    </reaction>
</comment>
<comment type="pathway">
    <text evidence="1">Amino-acid biosynthesis; L-arginine biosynthesis; N(2)-acetyl-L-ornithine from L-glutamate: step 2/4.</text>
</comment>
<comment type="subcellular location">
    <subcellularLocation>
        <location evidence="1">Cytoplasm</location>
    </subcellularLocation>
</comment>
<comment type="similarity">
    <text evidence="1">Belongs to the acetylglutamate kinase family. ArgB subfamily.</text>
</comment>
<reference key="1">
    <citation type="journal article" date="2008" name="Appl. Environ. Microbiol.">
        <title>The genome of Polaromonas sp. strain JS666: insights into the evolution of a hydrocarbon- and xenobiotic-degrading bacterium, and features of relevance to biotechnology.</title>
        <authorList>
            <person name="Mattes T.E."/>
            <person name="Alexander A.K."/>
            <person name="Richardson P.M."/>
            <person name="Munk A.C."/>
            <person name="Han C.S."/>
            <person name="Stothard P."/>
            <person name="Coleman N.V."/>
        </authorList>
    </citation>
    <scope>NUCLEOTIDE SEQUENCE [LARGE SCALE GENOMIC DNA]</scope>
    <source>
        <strain>JS666 / ATCC BAA-500</strain>
    </source>
</reference>
<evidence type="ECO:0000255" key="1">
    <source>
        <dbReference type="HAMAP-Rule" id="MF_00082"/>
    </source>
</evidence>
<gene>
    <name evidence="1" type="primary">argB</name>
    <name type="ordered locus">Bpro_3982</name>
</gene>
<sequence length="305" mass="32395">MTQPTVTADDPDLSHVGPRDKAEILAQALPYIRKFHGKTMVIKYGGNAMTDPALQADFAEDVVLLKLVGMNPVVVHGGGPQIEAALNRLGKKGHFIQGMRVTDEETMEVVEWVLAGQVQQDIVGLINQAGGKAVGLTGRDGGLIRAQKLKMVDKDDPAKEHDIGFVGDIVSIDPSVVKALQDDAFIPVISPIGFGESNESYNINADVVAGKLATVLKAEKLVLLTNTPGVLNKAGELLTDLTAREIDDLFADGTISGGMLPKIEGALDAAKSGVNSVHIIDGRVPHAMLLEILTDQAYGTMIRSH</sequence>
<proteinExistence type="inferred from homology"/>
<accession>Q125B6</accession>
<dbReference type="EC" id="2.7.2.8" evidence="1"/>
<dbReference type="EMBL" id="CP000316">
    <property type="protein sequence ID" value="ABE45876.1"/>
    <property type="molecule type" value="Genomic_DNA"/>
</dbReference>
<dbReference type="RefSeq" id="WP_011484866.1">
    <property type="nucleotide sequence ID" value="NC_007948.1"/>
</dbReference>
<dbReference type="SMR" id="Q125B6"/>
<dbReference type="STRING" id="296591.Bpro_3982"/>
<dbReference type="KEGG" id="pol:Bpro_3982"/>
<dbReference type="eggNOG" id="COG0548">
    <property type="taxonomic scope" value="Bacteria"/>
</dbReference>
<dbReference type="HOGENOM" id="CLU_053680_0_0_4"/>
<dbReference type="OrthoDB" id="9803155at2"/>
<dbReference type="UniPathway" id="UPA00068">
    <property type="reaction ID" value="UER00107"/>
</dbReference>
<dbReference type="Proteomes" id="UP000001983">
    <property type="component" value="Chromosome"/>
</dbReference>
<dbReference type="GO" id="GO:0005737">
    <property type="term" value="C:cytoplasm"/>
    <property type="evidence" value="ECO:0007669"/>
    <property type="project" value="UniProtKB-SubCell"/>
</dbReference>
<dbReference type="GO" id="GO:0003991">
    <property type="term" value="F:acetylglutamate kinase activity"/>
    <property type="evidence" value="ECO:0007669"/>
    <property type="project" value="UniProtKB-UniRule"/>
</dbReference>
<dbReference type="GO" id="GO:0005524">
    <property type="term" value="F:ATP binding"/>
    <property type="evidence" value="ECO:0007669"/>
    <property type="project" value="UniProtKB-UniRule"/>
</dbReference>
<dbReference type="GO" id="GO:0042450">
    <property type="term" value="P:arginine biosynthetic process via ornithine"/>
    <property type="evidence" value="ECO:0007669"/>
    <property type="project" value="UniProtKB-UniRule"/>
</dbReference>
<dbReference type="GO" id="GO:0006526">
    <property type="term" value="P:L-arginine biosynthetic process"/>
    <property type="evidence" value="ECO:0007669"/>
    <property type="project" value="UniProtKB-UniPathway"/>
</dbReference>
<dbReference type="CDD" id="cd04250">
    <property type="entry name" value="AAK_NAGK-C"/>
    <property type="match status" value="1"/>
</dbReference>
<dbReference type="FunFam" id="3.40.1160.10:FF:000004">
    <property type="entry name" value="Acetylglutamate kinase"/>
    <property type="match status" value="1"/>
</dbReference>
<dbReference type="Gene3D" id="3.40.1160.10">
    <property type="entry name" value="Acetylglutamate kinase-like"/>
    <property type="match status" value="1"/>
</dbReference>
<dbReference type="HAMAP" id="MF_00082">
    <property type="entry name" value="ArgB"/>
    <property type="match status" value="1"/>
</dbReference>
<dbReference type="InterPro" id="IPR036393">
    <property type="entry name" value="AceGlu_kinase-like_sf"/>
</dbReference>
<dbReference type="InterPro" id="IPR004662">
    <property type="entry name" value="AcgluKinase_fam"/>
</dbReference>
<dbReference type="InterPro" id="IPR037528">
    <property type="entry name" value="ArgB"/>
</dbReference>
<dbReference type="InterPro" id="IPR001048">
    <property type="entry name" value="Asp/Glu/Uridylate_kinase"/>
</dbReference>
<dbReference type="InterPro" id="IPR001057">
    <property type="entry name" value="Glu/AcGlu_kinase"/>
</dbReference>
<dbReference type="InterPro" id="IPR041727">
    <property type="entry name" value="NAGK-C"/>
</dbReference>
<dbReference type="NCBIfam" id="TIGR00761">
    <property type="entry name" value="argB"/>
    <property type="match status" value="1"/>
</dbReference>
<dbReference type="PANTHER" id="PTHR23342">
    <property type="entry name" value="N-ACETYLGLUTAMATE SYNTHASE"/>
    <property type="match status" value="1"/>
</dbReference>
<dbReference type="PANTHER" id="PTHR23342:SF0">
    <property type="entry name" value="N-ACETYLGLUTAMATE SYNTHASE, MITOCHONDRIAL"/>
    <property type="match status" value="1"/>
</dbReference>
<dbReference type="Pfam" id="PF00696">
    <property type="entry name" value="AA_kinase"/>
    <property type="match status" value="1"/>
</dbReference>
<dbReference type="PIRSF" id="PIRSF000728">
    <property type="entry name" value="NAGK"/>
    <property type="match status" value="1"/>
</dbReference>
<dbReference type="PRINTS" id="PR00474">
    <property type="entry name" value="GLU5KINASE"/>
</dbReference>
<dbReference type="SUPFAM" id="SSF53633">
    <property type="entry name" value="Carbamate kinase-like"/>
    <property type="match status" value="1"/>
</dbReference>
<name>ARGB_POLSJ</name>
<organism>
    <name type="scientific">Polaromonas sp. (strain JS666 / ATCC BAA-500)</name>
    <dbReference type="NCBI Taxonomy" id="296591"/>
    <lineage>
        <taxon>Bacteria</taxon>
        <taxon>Pseudomonadati</taxon>
        <taxon>Pseudomonadota</taxon>
        <taxon>Betaproteobacteria</taxon>
        <taxon>Burkholderiales</taxon>
        <taxon>Comamonadaceae</taxon>
        <taxon>Polaromonas</taxon>
    </lineage>
</organism>